<reference key="1">
    <citation type="journal article" date="2005" name="Proc. Natl. Acad. Sci. U.S.A.">
        <title>Complete genome sequence of Vibrio fischeri: a symbiotic bacterium with pathogenic congeners.</title>
        <authorList>
            <person name="Ruby E.G."/>
            <person name="Urbanowski M."/>
            <person name="Campbell J."/>
            <person name="Dunn A."/>
            <person name="Faini M."/>
            <person name="Gunsalus R."/>
            <person name="Lostroh P."/>
            <person name="Lupp C."/>
            <person name="McCann J."/>
            <person name="Millikan D."/>
            <person name="Schaefer A."/>
            <person name="Stabb E."/>
            <person name="Stevens A."/>
            <person name="Visick K."/>
            <person name="Whistler C."/>
            <person name="Greenberg E.P."/>
        </authorList>
    </citation>
    <scope>NUCLEOTIDE SEQUENCE [LARGE SCALE GENOMIC DNA]</scope>
    <source>
        <strain>ATCC 700601 / ES114</strain>
    </source>
</reference>
<reference key="2">
    <citation type="journal article" date="2008" name="BMC Genomics">
        <title>Comparative genomics-based investigation of resequencing targets in Vibrio fischeri: focus on point miscalls and artefactual expansions.</title>
        <authorList>
            <person name="Mandel M.J."/>
            <person name="Stabb E.V."/>
            <person name="Ruby E.G."/>
        </authorList>
    </citation>
    <scope>SEQUENCE REVISION</scope>
</reference>
<evidence type="ECO:0000255" key="1">
    <source>
        <dbReference type="HAMAP-Rule" id="MF_01322"/>
    </source>
</evidence>
<evidence type="ECO:0000256" key="2">
    <source>
        <dbReference type="SAM" id="MobiDB-lite"/>
    </source>
</evidence>
<proteinExistence type="inferred from homology"/>
<gene>
    <name evidence="1" type="primary">rpoC</name>
    <name type="ordered locus">VF_2412</name>
    <name type="ORF">VF2411</name>
</gene>
<organism>
    <name type="scientific">Aliivibrio fischeri (strain ATCC 700601 / ES114)</name>
    <name type="common">Vibrio fischeri</name>
    <dbReference type="NCBI Taxonomy" id="312309"/>
    <lineage>
        <taxon>Bacteria</taxon>
        <taxon>Pseudomonadati</taxon>
        <taxon>Pseudomonadota</taxon>
        <taxon>Gammaproteobacteria</taxon>
        <taxon>Vibrionales</taxon>
        <taxon>Vibrionaceae</taxon>
        <taxon>Aliivibrio</taxon>
    </lineage>
</organism>
<feature type="chain" id="PRO_0000353456" description="DNA-directed RNA polymerase subunit beta'">
    <location>
        <begin position="1"/>
        <end position="1401"/>
    </location>
</feature>
<feature type="region of interest" description="Disordered" evidence="2">
    <location>
        <begin position="1369"/>
        <end position="1388"/>
    </location>
</feature>
<feature type="binding site" evidence="1">
    <location>
        <position position="70"/>
    </location>
    <ligand>
        <name>Zn(2+)</name>
        <dbReference type="ChEBI" id="CHEBI:29105"/>
        <label>1</label>
    </ligand>
</feature>
<feature type="binding site" evidence="1">
    <location>
        <position position="72"/>
    </location>
    <ligand>
        <name>Zn(2+)</name>
        <dbReference type="ChEBI" id="CHEBI:29105"/>
        <label>1</label>
    </ligand>
</feature>
<feature type="binding site" evidence="1">
    <location>
        <position position="85"/>
    </location>
    <ligand>
        <name>Zn(2+)</name>
        <dbReference type="ChEBI" id="CHEBI:29105"/>
        <label>1</label>
    </ligand>
</feature>
<feature type="binding site" evidence="1">
    <location>
        <position position="88"/>
    </location>
    <ligand>
        <name>Zn(2+)</name>
        <dbReference type="ChEBI" id="CHEBI:29105"/>
        <label>1</label>
    </ligand>
</feature>
<feature type="binding site" evidence="1">
    <location>
        <position position="460"/>
    </location>
    <ligand>
        <name>Mg(2+)</name>
        <dbReference type="ChEBI" id="CHEBI:18420"/>
    </ligand>
</feature>
<feature type="binding site" evidence="1">
    <location>
        <position position="462"/>
    </location>
    <ligand>
        <name>Mg(2+)</name>
        <dbReference type="ChEBI" id="CHEBI:18420"/>
    </ligand>
</feature>
<feature type="binding site" evidence="1">
    <location>
        <position position="464"/>
    </location>
    <ligand>
        <name>Mg(2+)</name>
        <dbReference type="ChEBI" id="CHEBI:18420"/>
    </ligand>
</feature>
<feature type="binding site" evidence="1">
    <location>
        <position position="814"/>
    </location>
    <ligand>
        <name>Zn(2+)</name>
        <dbReference type="ChEBI" id="CHEBI:29105"/>
        <label>2</label>
    </ligand>
</feature>
<feature type="binding site" evidence="1">
    <location>
        <position position="888"/>
    </location>
    <ligand>
        <name>Zn(2+)</name>
        <dbReference type="ChEBI" id="CHEBI:29105"/>
        <label>2</label>
    </ligand>
</feature>
<feature type="binding site" evidence="1">
    <location>
        <position position="895"/>
    </location>
    <ligand>
        <name>Zn(2+)</name>
        <dbReference type="ChEBI" id="CHEBI:29105"/>
        <label>2</label>
    </ligand>
</feature>
<feature type="binding site" evidence="1">
    <location>
        <position position="898"/>
    </location>
    <ligand>
        <name>Zn(2+)</name>
        <dbReference type="ChEBI" id="CHEBI:29105"/>
        <label>2</label>
    </ligand>
</feature>
<accession>Q5E239</accession>
<keyword id="KW-0240">DNA-directed RNA polymerase</keyword>
<keyword id="KW-0460">Magnesium</keyword>
<keyword id="KW-0479">Metal-binding</keyword>
<keyword id="KW-0548">Nucleotidyltransferase</keyword>
<keyword id="KW-1185">Reference proteome</keyword>
<keyword id="KW-0804">Transcription</keyword>
<keyword id="KW-0808">Transferase</keyword>
<keyword id="KW-0862">Zinc</keyword>
<name>RPOC_ALIF1</name>
<dbReference type="EC" id="2.7.7.6" evidence="1"/>
<dbReference type="EMBL" id="CP000020">
    <property type="protein sequence ID" value="AAW86907.2"/>
    <property type="molecule type" value="Genomic_DNA"/>
</dbReference>
<dbReference type="RefSeq" id="WP_011262790.1">
    <property type="nucleotide sequence ID" value="NC_006840.2"/>
</dbReference>
<dbReference type="RefSeq" id="YP_205795.2">
    <property type="nucleotide sequence ID" value="NC_006840.2"/>
</dbReference>
<dbReference type="SMR" id="Q5E239"/>
<dbReference type="STRING" id="312309.VF_2412"/>
<dbReference type="EnsemblBacteria" id="AAW86907">
    <property type="protein sequence ID" value="AAW86907"/>
    <property type="gene ID" value="VF_2412"/>
</dbReference>
<dbReference type="GeneID" id="54165128"/>
<dbReference type="KEGG" id="vfi:VF_2412"/>
<dbReference type="PATRIC" id="fig|312309.11.peg.2446"/>
<dbReference type="eggNOG" id="COG0086">
    <property type="taxonomic scope" value="Bacteria"/>
</dbReference>
<dbReference type="HOGENOM" id="CLU_000524_3_1_6"/>
<dbReference type="OrthoDB" id="9815296at2"/>
<dbReference type="Proteomes" id="UP000000537">
    <property type="component" value="Chromosome I"/>
</dbReference>
<dbReference type="GO" id="GO:0000428">
    <property type="term" value="C:DNA-directed RNA polymerase complex"/>
    <property type="evidence" value="ECO:0007669"/>
    <property type="project" value="UniProtKB-KW"/>
</dbReference>
<dbReference type="GO" id="GO:0003677">
    <property type="term" value="F:DNA binding"/>
    <property type="evidence" value="ECO:0007669"/>
    <property type="project" value="UniProtKB-UniRule"/>
</dbReference>
<dbReference type="GO" id="GO:0003899">
    <property type="term" value="F:DNA-directed RNA polymerase activity"/>
    <property type="evidence" value="ECO:0007669"/>
    <property type="project" value="UniProtKB-UniRule"/>
</dbReference>
<dbReference type="GO" id="GO:0000287">
    <property type="term" value="F:magnesium ion binding"/>
    <property type="evidence" value="ECO:0007669"/>
    <property type="project" value="UniProtKB-UniRule"/>
</dbReference>
<dbReference type="GO" id="GO:0008270">
    <property type="term" value="F:zinc ion binding"/>
    <property type="evidence" value="ECO:0007669"/>
    <property type="project" value="UniProtKB-UniRule"/>
</dbReference>
<dbReference type="GO" id="GO:0006351">
    <property type="term" value="P:DNA-templated transcription"/>
    <property type="evidence" value="ECO:0007669"/>
    <property type="project" value="UniProtKB-UniRule"/>
</dbReference>
<dbReference type="CDD" id="cd02655">
    <property type="entry name" value="RNAP_beta'_C"/>
    <property type="match status" value="1"/>
</dbReference>
<dbReference type="CDD" id="cd01609">
    <property type="entry name" value="RNAP_beta'_N"/>
    <property type="match status" value="1"/>
</dbReference>
<dbReference type="FunFam" id="1.10.132.30:FF:000003">
    <property type="entry name" value="DNA-directed RNA polymerase subunit beta"/>
    <property type="match status" value="1"/>
</dbReference>
<dbReference type="FunFam" id="1.10.150.390:FF:000002">
    <property type="entry name" value="DNA-directed RNA polymerase subunit beta"/>
    <property type="match status" value="1"/>
</dbReference>
<dbReference type="FunFam" id="1.10.40.90:FF:000001">
    <property type="entry name" value="DNA-directed RNA polymerase subunit beta"/>
    <property type="match status" value="1"/>
</dbReference>
<dbReference type="FunFam" id="4.10.860.120:FF:000001">
    <property type="entry name" value="DNA-directed RNA polymerase subunit beta"/>
    <property type="match status" value="1"/>
</dbReference>
<dbReference type="Gene3D" id="1.10.132.30">
    <property type="match status" value="1"/>
</dbReference>
<dbReference type="Gene3D" id="1.10.150.390">
    <property type="match status" value="1"/>
</dbReference>
<dbReference type="Gene3D" id="1.10.1790.20">
    <property type="match status" value="1"/>
</dbReference>
<dbReference type="Gene3D" id="1.10.40.90">
    <property type="match status" value="1"/>
</dbReference>
<dbReference type="Gene3D" id="2.40.40.20">
    <property type="match status" value="1"/>
</dbReference>
<dbReference type="Gene3D" id="2.40.50.100">
    <property type="match status" value="3"/>
</dbReference>
<dbReference type="Gene3D" id="4.10.860.120">
    <property type="entry name" value="RNA polymerase II, clamp domain"/>
    <property type="match status" value="1"/>
</dbReference>
<dbReference type="Gene3D" id="1.10.274.100">
    <property type="entry name" value="RNA polymerase Rpb1, domain 3"/>
    <property type="match status" value="1"/>
</dbReference>
<dbReference type="HAMAP" id="MF_01322">
    <property type="entry name" value="RNApol_bact_RpoC"/>
    <property type="match status" value="1"/>
</dbReference>
<dbReference type="InterPro" id="IPR045867">
    <property type="entry name" value="DNA-dir_RpoC_beta_prime"/>
</dbReference>
<dbReference type="InterPro" id="IPR012754">
    <property type="entry name" value="DNA-dir_RpoC_beta_prime_bact"/>
</dbReference>
<dbReference type="InterPro" id="IPR000722">
    <property type="entry name" value="RNA_pol_asu"/>
</dbReference>
<dbReference type="InterPro" id="IPR006592">
    <property type="entry name" value="RNA_pol_N"/>
</dbReference>
<dbReference type="InterPro" id="IPR007080">
    <property type="entry name" value="RNA_pol_Rpb1_1"/>
</dbReference>
<dbReference type="InterPro" id="IPR007066">
    <property type="entry name" value="RNA_pol_Rpb1_3"/>
</dbReference>
<dbReference type="InterPro" id="IPR042102">
    <property type="entry name" value="RNA_pol_Rpb1_3_sf"/>
</dbReference>
<dbReference type="InterPro" id="IPR007083">
    <property type="entry name" value="RNA_pol_Rpb1_4"/>
</dbReference>
<dbReference type="InterPro" id="IPR007081">
    <property type="entry name" value="RNA_pol_Rpb1_5"/>
</dbReference>
<dbReference type="InterPro" id="IPR044893">
    <property type="entry name" value="RNA_pol_Rpb1_clamp_domain"/>
</dbReference>
<dbReference type="InterPro" id="IPR038120">
    <property type="entry name" value="Rpb1_funnel_sf"/>
</dbReference>
<dbReference type="NCBIfam" id="TIGR02386">
    <property type="entry name" value="rpoC_TIGR"/>
    <property type="match status" value="1"/>
</dbReference>
<dbReference type="PANTHER" id="PTHR19376">
    <property type="entry name" value="DNA-DIRECTED RNA POLYMERASE"/>
    <property type="match status" value="1"/>
</dbReference>
<dbReference type="PANTHER" id="PTHR19376:SF54">
    <property type="entry name" value="DNA-DIRECTED RNA POLYMERASE SUBUNIT BETA"/>
    <property type="match status" value="1"/>
</dbReference>
<dbReference type="Pfam" id="PF04997">
    <property type="entry name" value="RNA_pol_Rpb1_1"/>
    <property type="match status" value="1"/>
</dbReference>
<dbReference type="Pfam" id="PF00623">
    <property type="entry name" value="RNA_pol_Rpb1_2"/>
    <property type="match status" value="1"/>
</dbReference>
<dbReference type="Pfam" id="PF04983">
    <property type="entry name" value="RNA_pol_Rpb1_3"/>
    <property type="match status" value="1"/>
</dbReference>
<dbReference type="Pfam" id="PF05000">
    <property type="entry name" value="RNA_pol_Rpb1_4"/>
    <property type="match status" value="1"/>
</dbReference>
<dbReference type="Pfam" id="PF04998">
    <property type="entry name" value="RNA_pol_Rpb1_5"/>
    <property type="match status" value="1"/>
</dbReference>
<dbReference type="SMART" id="SM00663">
    <property type="entry name" value="RPOLA_N"/>
    <property type="match status" value="1"/>
</dbReference>
<dbReference type="SUPFAM" id="SSF64484">
    <property type="entry name" value="beta and beta-prime subunits of DNA dependent RNA-polymerase"/>
    <property type="match status" value="1"/>
</dbReference>
<protein>
    <recommendedName>
        <fullName evidence="1">DNA-directed RNA polymerase subunit beta'</fullName>
        <shortName evidence="1">RNAP subunit beta'</shortName>
        <ecNumber evidence="1">2.7.7.6</ecNumber>
    </recommendedName>
    <alternativeName>
        <fullName evidence="1">RNA polymerase subunit beta'</fullName>
    </alternativeName>
    <alternativeName>
        <fullName evidence="1">Transcriptase subunit beta'</fullName>
    </alternativeName>
</protein>
<sequence length="1401" mass="155111">MKDLLKFLKAQHKTEEFDAIKIGLASPDQIRSWSFGEVKKPETINYRTFKPERDGLFCARIFGPVKDYECLCGKYKRLKHRGVICEKCGVEVTQTKVRRDRMGHIELASPVAHIWFLKSLPSRIGLLMDIPLRDIERVLYFESYVVTEPGMTDLERSQLLSEEEYLDKLEEFGDEFTAKMGAEAIKDLLASMDMQAEIEDMREELETTNSETKRKKVTKRLKLVEAFVQSGNNPEWMILTVLPVLPPDLRPLVPLDGGRFATSDLNDLYRRVINRNNRLKRLLDLAAPDIIVRNEKRMLQESVDALLDNGRRGRAITGSNKRPLKSLADMIKGKQGRFRQNLLGKRVDYSGRSVITVGPYLRLHQCGLPKKMALELFKPFIYSKLEGRGLATTIKAAKKMVEREEAIVWDILDDVIREHPVLLNRAPTLHRLGIQAFEPVLIEGKAIQLHPLVCAAYNADFDGDQMAVHVPLTLEAQLEARTLMMSTNNILSPASGDPIIVPSQDVVLGLYYMTREKINAKGEGMYLEGFAEAEKAYRTGVAELHARVKVRITEVLRDENGIETRETKLVDTTVGRAMLWQIVPEGLPYSIINQKLGKKQISNLLNEAYRTLGLKDTVVFADQIMYTGFAYAALSGASVGIDDMVIPDAKYTKVADAEEEVKQIQEQYQSGLVTAGERYNKVIDIWAATNEQVAKEMMDNLSSETVLNRDGEEEQQESFNSVYMMADSGARGSAAQIRQLAGMRGLMAKPDGSIIETPITANFREGLNVNQYFISTHGARKGLADTALKTANSGYLTRRLVDVAQDVVVHLDDCGTYEGVTMTPLIEGGDVKEPLHERVLGRVVAEDVLKPGTDEILLPRNTLLDEKQCQIVEENSVDQIKVRSVVSCEADFGCCANCYGRDLARGHMVNQGESVGVIAAQSIGEPGTQLTMRTFHIGGAASTAAADNSIQVKTTGSIKLHNAKHVTNGEGNLVITSRASELTVIDEHGRTKESYKLSYGTILTKKDGDAVNQGDKIASWDPHTMPIITEVQGQVQFVDMIDGVTITTQTDELTGLSSIVVLDAAERASAGKDMRPTVKLVDANGNDIMIPGTEMPAQYFLPGKAIVNLADGGNVGIGETLARIPQASSGTKDITGGLPRVADLFEARKPKEPAILAEHAGIVAFGKETKGKVRLLITRDDNGEVYEEMIHKHRQLNIFEGDKVERGDVISDGPETPHDILRLRGIHAVTEYITNEVQEVYRLQGVKINDKHIETIVRQMLRKCTITHSGDSTFLEGEQLEFANVTIANRQLEAEGKQPARFERDLLGITKASLATESFISAASFQETTRVLTEAAVSGKRDELRGLKENVIVGRLIPAGTGFAYHQERQKQKAVEQEGPSAEQATDNLAALLNAGFSSEE</sequence>
<comment type="function">
    <text evidence="1">DNA-dependent RNA polymerase catalyzes the transcription of DNA into RNA using the four ribonucleoside triphosphates as substrates.</text>
</comment>
<comment type="catalytic activity">
    <reaction evidence="1">
        <text>RNA(n) + a ribonucleoside 5'-triphosphate = RNA(n+1) + diphosphate</text>
        <dbReference type="Rhea" id="RHEA:21248"/>
        <dbReference type="Rhea" id="RHEA-COMP:14527"/>
        <dbReference type="Rhea" id="RHEA-COMP:17342"/>
        <dbReference type="ChEBI" id="CHEBI:33019"/>
        <dbReference type="ChEBI" id="CHEBI:61557"/>
        <dbReference type="ChEBI" id="CHEBI:140395"/>
        <dbReference type="EC" id="2.7.7.6"/>
    </reaction>
</comment>
<comment type="cofactor">
    <cofactor evidence="1">
        <name>Mg(2+)</name>
        <dbReference type="ChEBI" id="CHEBI:18420"/>
    </cofactor>
    <text evidence="1">Binds 1 Mg(2+) ion per subunit.</text>
</comment>
<comment type="cofactor">
    <cofactor evidence="1">
        <name>Zn(2+)</name>
        <dbReference type="ChEBI" id="CHEBI:29105"/>
    </cofactor>
    <text evidence="1">Binds 2 Zn(2+) ions per subunit.</text>
</comment>
<comment type="subunit">
    <text evidence="1">The RNAP catalytic core consists of 2 alpha, 1 beta, 1 beta' and 1 omega subunit. When a sigma factor is associated with the core the holoenzyme is formed, which can initiate transcription.</text>
</comment>
<comment type="similarity">
    <text evidence="1">Belongs to the RNA polymerase beta' chain family.</text>
</comment>